<organism>
    <name type="scientific">Agrobacterium fabrum (strain C58 / ATCC 33970)</name>
    <name type="common">Agrobacterium tumefaciens (strain C58)</name>
    <dbReference type="NCBI Taxonomy" id="176299"/>
    <lineage>
        <taxon>Bacteria</taxon>
        <taxon>Pseudomonadati</taxon>
        <taxon>Pseudomonadota</taxon>
        <taxon>Alphaproteobacteria</taxon>
        <taxon>Hyphomicrobiales</taxon>
        <taxon>Rhizobiaceae</taxon>
        <taxon>Rhizobium/Agrobacterium group</taxon>
        <taxon>Agrobacterium</taxon>
        <taxon>Agrobacterium tumefaciens complex</taxon>
    </lineage>
</organism>
<keyword id="KW-0521">NADP</keyword>
<keyword id="KW-0560">Oxidoreductase</keyword>
<keyword id="KW-1185">Reference proteome</keyword>
<protein>
    <recommendedName>
        <fullName>Delta(1)-pyrroline-2-carboxylate reductase</fullName>
        <shortName>Pyr2C reductase</shortName>
        <ecNumber evidence="2">1.5.1.49</ecNumber>
    </recommendedName>
    <alternativeName>
        <fullName evidence="3">Proline ketimine reductase</fullName>
    </alternativeName>
</protein>
<evidence type="ECO:0000250" key="1">
    <source>
        <dbReference type="UniProtKB" id="Q4U331"/>
    </source>
</evidence>
<evidence type="ECO:0000269" key="2">
    <source>
    </source>
</evidence>
<evidence type="ECO:0000303" key="3">
    <source>
    </source>
</evidence>
<evidence type="ECO:0000305" key="4"/>
<evidence type="ECO:0000312" key="5">
    <source>
        <dbReference type="EMBL" id="AAK88773.2"/>
    </source>
</evidence>
<sequence>MSDTTTLTIEALFQRVESIFLRAGLNAVQSGALARVITAGERDACKSHGIYRIEGALRTVKAAKVKPDAIPEVAEDDGTAIVKVNAMGGFANPAFELGLPALAERAKRLGLAALVINDCTHFSALWPEVEGLTSNGLAGLVMCPSYSTVAPTGGTKPLLGTNPFAFGWPRKDTSPYVFDFATSVAARGEIELHRRARKSLPEGWAVDADGNPTTDPEAALAGAMLPFGGHKGSAIGTMIELLAGIMIGDLTSPEVLDYLGTTTLAPFHGELIVAFSPEAFAKGRPGDPFQRAEVLFEAIIGQGARLPSGRRFAARAKSESEGITLTAAEMAGLDRLLEKGLDAVS</sequence>
<proteinExistence type="evidence at protein level"/>
<dbReference type="EC" id="1.5.1.49" evidence="2"/>
<dbReference type="EMBL" id="AE007870">
    <property type="protein sequence ID" value="AAK88773.2"/>
    <property type="molecule type" value="Genomic_DNA"/>
</dbReference>
<dbReference type="RefSeq" id="NP_355988.2">
    <property type="nucleotide sequence ID" value="NC_003063.2"/>
</dbReference>
<dbReference type="RefSeq" id="WP_010974066.1">
    <property type="nucleotide sequence ID" value="NC_003063.2"/>
</dbReference>
<dbReference type="SMR" id="Q7CVK1"/>
<dbReference type="STRING" id="176299.Atu4676"/>
<dbReference type="EnsemblBacteria" id="AAK88773">
    <property type="protein sequence ID" value="AAK88773"/>
    <property type="gene ID" value="Atu4676"/>
</dbReference>
<dbReference type="GeneID" id="1136550"/>
<dbReference type="KEGG" id="atu:Atu4676"/>
<dbReference type="PATRIC" id="fig|176299.10.peg.4481"/>
<dbReference type="eggNOG" id="COG2055">
    <property type="taxonomic scope" value="Bacteria"/>
</dbReference>
<dbReference type="HOGENOM" id="CLU_040452_0_0_5"/>
<dbReference type="OrthoDB" id="9811519at2"/>
<dbReference type="PhylomeDB" id="Q7CVK1"/>
<dbReference type="BioCyc" id="AGRO:ATU4676-MONOMER"/>
<dbReference type="SABIO-RK" id="Q7CVK1"/>
<dbReference type="Proteomes" id="UP000000813">
    <property type="component" value="Chromosome linear"/>
</dbReference>
<dbReference type="GO" id="GO:0016491">
    <property type="term" value="F:oxidoreductase activity"/>
    <property type="evidence" value="ECO:0007669"/>
    <property type="project" value="UniProtKB-KW"/>
</dbReference>
<dbReference type="Gene3D" id="1.10.1530.10">
    <property type="match status" value="1"/>
</dbReference>
<dbReference type="Gene3D" id="3.30.1370.60">
    <property type="entry name" value="Hypothetical oxidoreductase yiak, domain 2"/>
    <property type="match status" value="1"/>
</dbReference>
<dbReference type="InterPro" id="IPR043144">
    <property type="entry name" value="Mal/L-sulf/L-lact_DH-like_ah"/>
</dbReference>
<dbReference type="InterPro" id="IPR043143">
    <property type="entry name" value="Mal/L-sulf/L-lact_DH-like_NADP"/>
</dbReference>
<dbReference type="InterPro" id="IPR036111">
    <property type="entry name" value="Mal/L-sulfo/L-lacto_DH-like_sf"/>
</dbReference>
<dbReference type="InterPro" id="IPR003767">
    <property type="entry name" value="Malate/L-lactate_DH-like"/>
</dbReference>
<dbReference type="PANTHER" id="PTHR11091:SF0">
    <property type="entry name" value="MALATE DEHYDROGENASE"/>
    <property type="match status" value="1"/>
</dbReference>
<dbReference type="PANTHER" id="PTHR11091">
    <property type="entry name" value="OXIDOREDUCTASE-RELATED"/>
    <property type="match status" value="1"/>
</dbReference>
<dbReference type="Pfam" id="PF02615">
    <property type="entry name" value="Ldh_2"/>
    <property type="match status" value="1"/>
</dbReference>
<dbReference type="SUPFAM" id="SSF89733">
    <property type="entry name" value="L-sulfolactate dehydrogenase-like"/>
    <property type="match status" value="1"/>
</dbReference>
<feature type="chain" id="PRO_0000432291" description="Delta(1)-pyrroline-2-carboxylate reductase">
    <location>
        <begin position="1"/>
        <end position="345"/>
    </location>
</feature>
<feature type="active site" description="Charge relay system" evidence="1">
    <location>
        <position position="47"/>
    </location>
</feature>
<feature type="active site" description="Proton donor" evidence="1">
    <location>
        <position position="48"/>
    </location>
</feature>
<feature type="active site" description="Charge relay system" evidence="1">
    <location>
        <position position="189"/>
    </location>
</feature>
<feature type="binding site" evidence="1">
    <location>
        <position position="52"/>
    </location>
    <ligand>
        <name>substrate</name>
    </ligand>
</feature>
<feature type="binding site" description="in other chain" evidence="1">
    <location>
        <begin position="121"/>
        <end position="125"/>
    </location>
    <ligand>
        <name>NADP(+)</name>
        <dbReference type="ChEBI" id="CHEBI:58349"/>
        <note>ligand shared between dimeric partners</note>
    </ligand>
</feature>
<feature type="binding site" evidence="1">
    <location>
        <position position="161"/>
    </location>
    <ligand>
        <name>substrate</name>
    </ligand>
</feature>
<feature type="binding site" description="in other chain" evidence="1">
    <location>
        <begin position="179"/>
        <end position="181"/>
    </location>
    <ligand>
        <name>NADP(+)</name>
        <dbReference type="ChEBI" id="CHEBI:58349"/>
        <note>ligand shared between dimeric partners</note>
    </ligand>
</feature>
<feature type="binding site" evidence="1">
    <location>
        <begin position="187"/>
        <end position="188"/>
    </location>
    <ligand>
        <name>substrate</name>
    </ligand>
</feature>
<feature type="binding site" evidence="1">
    <location>
        <begin position="230"/>
        <end position="231"/>
    </location>
    <ligand>
        <name>NADP(+)</name>
        <dbReference type="ChEBI" id="CHEBI:58349"/>
        <note>ligand shared between dimeric partners</note>
    </ligand>
</feature>
<feature type="binding site" description="in other chain" evidence="1">
    <location>
        <begin position="305"/>
        <end position="311"/>
    </location>
    <ligand>
        <name>NADP(+)</name>
        <dbReference type="ChEBI" id="CHEBI:58349"/>
        <note>ligand shared between dimeric partners</note>
    </ligand>
</feature>
<gene>
    <name evidence="5" type="ordered locus">Atu4676</name>
</gene>
<name>PY2CR_AGRFC</name>
<accession>Q7CVK1</accession>
<reference key="1">
    <citation type="journal article" date="2001" name="Science">
        <title>The genome of the natural genetic engineer Agrobacterium tumefaciens C58.</title>
        <authorList>
            <person name="Wood D.W."/>
            <person name="Setubal J.C."/>
            <person name="Kaul R."/>
            <person name="Monks D.E."/>
            <person name="Kitajima J.P."/>
            <person name="Okura V.K."/>
            <person name="Zhou Y."/>
            <person name="Chen L."/>
            <person name="Wood G.E."/>
            <person name="Almeida N.F. Jr."/>
            <person name="Woo L."/>
            <person name="Chen Y."/>
            <person name="Paulsen I.T."/>
            <person name="Eisen J.A."/>
            <person name="Karp P.D."/>
            <person name="Bovee D. Sr."/>
            <person name="Chapman P."/>
            <person name="Clendenning J."/>
            <person name="Deatherage G."/>
            <person name="Gillet W."/>
            <person name="Grant C."/>
            <person name="Kutyavin T."/>
            <person name="Levy R."/>
            <person name="Li M.-J."/>
            <person name="McClelland E."/>
            <person name="Palmieri A."/>
            <person name="Raymond C."/>
            <person name="Rouse G."/>
            <person name="Saenphimmachak C."/>
            <person name="Wu Z."/>
            <person name="Romero P."/>
            <person name="Gordon D."/>
            <person name="Zhang S."/>
            <person name="Yoo H."/>
            <person name="Tao Y."/>
            <person name="Biddle P."/>
            <person name="Jung M."/>
            <person name="Krespan W."/>
            <person name="Perry M."/>
            <person name="Gordon-Kamm B."/>
            <person name="Liao L."/>
            <person name="Kim S."/>
            <person name="Hendrick C."/>
            <person name="Zhao Z.-Y."/>
            <person name="Dolan M."/>
            <person name="Chumley F."/>
            <person name="Tingey S.V."/>
            <person name="Tomb J.-F."/>
            <person name="Gordon M.P."/>
            <person name="Olson M.V."/>
            <person name="Nester E.W."/>
        </authorList>
    </citation>
    <scope>NUCLEOTIDE SEQUENCE [LARGE SCALE GENOMIC DNA]</scope>
    <source>
        <strain>C58 / ATCC 33970</strain>
    </source>
</reference>
<reference key="2">
    <citation type="journal article" date="2001" name="Science">
        <title>Genome sequence of the plant pathogen and biotechnology agent Agrobacterium tumefaciens C58.</title>
        <authorList>
            <person name="Goodner B."/>
            <person name="Hinkle G."/>
            <person name="Gattung S."/>
            <person name="Miller N."/>
            <person name="Blanchard M."/>
            <person name="Qurollo B."/>
            <person name="Goldman B.S."/>
            <person name="Cao Y."/>
            <person name="Askenazi M."/>
            <person name="Halling C."/>
            <person name="Mullin L."/>
            <person name="Houmiel K."/>
            <person name="Gordon J."/>
            <person name="Vaudin M."/>
            <person name="Iartchouk O."/>
            <person name="Epp A."/>
            <person name="Liu F."/>
            <person name="Wollam C."/>
            <person name="Allinger M."/>
            <person name="Doughty D."/>
            <person name="Scott C."/>
            <person name="Lappas C."/>
            <person name="Markelz B."/>
            <person name="Flanagan C."/>
            <person name="Crowell C."/>
            <person name="Gurson J."/>
            <person name="Lomo C."/>
            <person name="Sear C."/>
            <person name="Strub G."/>
            <person name="Cielo C."/>
            <person name="Slater S."/>
        </authorList>
    </citation>
    <scope>NUCLEOTIDE SEQUENCE [LARGE SCALE GENOMIC DNA]</scope>
    <source>
        <strain>C58 / ATCC 33970</strain>
    </source>
</reference>
<reference key="3">
    <citation type="journal article" date="2014" name="Elife">
        <title>Prediction and characterization of enzymatic activities guided by sequence similarity and genome neighborhood networks.</title>
        <authorList>
            <person name="Zhao S."/>
            <person name="Sakai A."/>
            <person name="Zhang X."/>
            <person name="Vetting M.W."/>
            <person name="Kumar R."/>
            <person name="Hillerich B."/>
            <person name="San Francisco B."/>
            <person name="Solbiati J."/>
            <person name="Steves A."/>
            <person name="Brown S."/>
            <person name="Akiva E."/>
            <person name="Barber A."/>
            <person name="Seidel R.D."/>
            <person name="Babbitt P.C."/>
            <person name="Almo S.C."/>
            <person name="Gerlt J.A."/>
            <person name="Jacobson M.P."/>
        </authorList>
    </citation>
    <scope>FUNCTION</scope>
    <scope>CATALYTIC ACTIVITY</scope>
    <scope>BIOPHYSICOCHEMICAL PROPERTIES</scope>
    <scope>INDUCTION</scope>
    <source>
        <strain>C58 / ATCC 33970</strain>
    </source>
</reference>
<comment type="function">
    <text evidence="2">Catalyzes the reduction of Delta(1)-pyrroline-2-carboxylate (Pyr2C) to L-proline, using NADPH as the electron donor. Is likely involved in a degradation pathway that converts trans-3-hydroxy-L-proline (t3LHyp) to L-proline, which would allow A.tumefaciens to grow on t3LHyp as a sole carbon source.</text>
</comment>
<comment type="catalytic activity">
    <reaction evidence="2">
        <text>L-proline + NAD(+) = 1-pyrroline-2-carboxylate + NADH + H(+)</text>
        <dbReference type="Rhea" id="RHEA:20321"/>
        <dbReference type="ChEBI" id="CHEBI:15378"/>
        <dbReference type="ChEBI" id="CHEBI:39785"/>
        <dbReference type="ChEBI" id="CHEBI:57540"/>
        <dbReference type="ChEBI" id="CHEBI:57945"/>
        <dbReference type="ChEBI" id="CHEBI:60039"/>
        <dbReference type="EC" id="1.5.1.49"/>
    </reaction>
</comment>
<comment type="catalytic activity">
    <reaction evidence="2">
        <text>L-proline + NADP(+) = 1-pyrroline-2-carboxylate + NADPH + H(+)</text>
        <dbReference type="Rhea" id="RHEA:20317"/>
        <dbReference type="ChEBI" id="CHEBI:15378"/>
        <dbReference type="ChEBI" id="CHEBI:39785"/>
        <dbReference type="ChEBI" id="CHEBI:57783"/>
        <dbReference type="ChEBI" id="CHEBI:58349"/>
        <dbReference type="ChEBI" id="CHEBI:60039"/>
        <dbReference type="EC" id="1.5.1.49"/>
    </reaction>
</comment>
<comment type="biophysicochemical properties">
    <kinetics>
        <KM evidence="2">0.33 mM for Delta(1)-pyrroline-2-carboxylate (using NADPH as cosubstrate)</KM>
        <text evidence="2">kcat is 32 sec(-1) for Pyr2C reduction using NADPH.</text>
    </kinetics>
</comment>
<comment type="subunit">
    <text evidence="1">Homodimer.</text>
</comment>
<comment type="induction">
    <text evidence="2">Is up-regulated when the bacterium is grown on t4LHyp or t3LHyp as sole carbon source.</text>
</comment>
<comment type="similarity">
    <text evidence="4">Belongs to the LDH2/MDH2 oxidoreductase family.</text>
</comment>